<sequence>MRTYSPKPGDVTRQWHIIDAQDIVLGRLATTAANLLRGKHKAIYAPHMDMGDFVIIINADKVHLSGNKKTQKMAYRHSGFPGGLRSVRYDELLAKNPEKAVEKAIKGMIPKNTLGRQMLSKLKVYAGDQHPHAAQQPVPFEITQVAQ</sequence>
<organism>
    <name type="scientific">Streptomyces griseus subsp. griseus (strain JCM 4626 / CBS 651.72 / NBRC 13350 / KCC S-0626 / ISP 5235)</name>
    <dbReference type="NCBI Taxonomy" id="455632"/>
    <lineage>
        <taxon>Bacteria</taxon>
        <taxon>Bacillati</taxon>
        <taxon>Actinomycetota</taxon>
        <taxon>Actinomycetes</taxon>
        <taxon>Kitasatosporales</taxon>
        <taxon>Streptomycetaceae</taxon>
        <taxon>Streptomyces</taxon>
    </lineage>
</organism>
<dbReference type="EMBL" id="AP009493">
    <property type="protein sequence ID" value="BAG19631.1"/>
    <property type="molecule type" value="Genomic_DNA"/>
</dbReference>
<dbReference type="RefSeq" id="WP_003966932.1">
    <property type="nucleotide sequence ID" value="NC_010572.1"/>
</dbReference>
<dbReference type="SMR" id="B1W3X5"/>
<dbReference type="GeneID" id="97760403"/>
<dbReference type="KEGG" id="sgr:SGR_2802"/>
<dbReference type="eggNOG" id="COG0102">
    <property type="taxonomic scope" value="Bacteria"/>
</dbReference>
<dbReference type="HOGENOM" id="CLU_082184_2_2_11"/>
<dbReference type="Proteomes" id="UP000001685">
    <property type="component" value="Chromosome"/>
</dbReference>
<dbReference type="GO" id="GO:0022625">
    <property type="term" value="C:cytosolic large ribosomal subunit"/>
    <property type="evidence" value="ECO:0007669"/>
    <property type="project" value="TreeGrafter"/>
</dbReference>
<dbReference type="GO" id="GO:0003729">
    <property type="term" value="F:mRNA binding"/>
    <property type="evidence" value="ECO:0007669"/>
    <property type="project" value="TreeGrafter"/>
</dbReference>
<dbReference type="GO" id="GO:0003735">
    <property type="term" value="F:structural constituent of ribosome"/>
    <property type="evidence" value="ECO:0007669"/>
    <property type="project" value="InterPro"/>
</dbReference>
<dbReference type="GO" id="GO:0017148">
    <property type="term" value="P:negative regulation of translation"/>
    <property type="evidence" value="ECO:0007669"/>
    <property type="project" value="TreeGrafter"/>
</dbReference>
<dbReference type="GO" id="GO:0006412">
    <property type="term" value="P:translation"/>
    <property type="evidence" value="ECO:0007669"/>
    <property type="project" value="UniProtKB-UniRule"/>
</dbReference>
<dbReference type="CDD" id="cd00392">
    <property type="entry name" value="Ribosomal_L13"/>
    <property type="match status" value="1"/>
</dbReference>
<dbReference type="FunFam" id="3.90.1180.10:FF:000001">
    <property type="entry name" value="50S ribosomal protein L13"/>
    <property type="match status" value="1"/>
</dbReference>
<dbReference type="Gene3D" id="3.90.1180.10">
    <property type="entry name" value="Ribosomal protein L13"/>
    <property type="match status" value="1"/>
</dbReference>
<dbReference type="HAMAP" id="MF_01366">
    <property type="entry name" value="Ribosomal_uL13"/>
    <property type="match status" value="1"/>
</dbReference>
<dbReference type="InterPro" id="IPR005822">
    <property type="entry name" value="Ribosomal_uL13"/>
</dbReference>
<dbReference type="InterPro" id="IPR005823">
    <property type="entry name" value="Ribosomal_uL13_bac-type"/>
</dbReference>
<dbReference type="InterPro" id="IPR023563">
    <property type="entry name" value="Ribosomal_uL13_CS"/>
</dbReference>
<dbReference type="InterPro" id="IPR036899">
    <property type="entry name" value="Ribosomal_uL13_sf"/>
</dbReference>
<dbReference type="NCBIfam" id="TIGR01066">
    <property type="entry name" value="rplM_bact"/>
    <property type="match status" value="1"/>
</dbReference>
<dbReference type="PANTHER" id="PTHR11545:SF2">
    <property type="entry name" value="LARGE RIBOSOMAL SUBUNIT PROTEIN UL13M"/>
    <property type="match status" value="1"/>
</dbReference>
<dbReference type="PANTHER" id="PTHR11545">
    <property type="entry name" value="RIBOSOMAL PROTEIN L13"/>
    <property type="match status" value="1"/>
</dbReference>
<dbReference type="Pfam" id="PF00572">
    <property type="entry name" value="Ribosomal_L13"/>
    <property type="match status" value="1"/>
</dbReference>
<dbReference type="PIRSF" id="PIRSF002181">
    <property type="entry name" value="Ribosomal_L13"/>
    <property type="match status" value="1"/>
</dbReference>
<dbReference type="SUPFAM" id="SSF52161">
    <property type="entry name" value="Ribosomal protein L13"/>
    <property type="match status" value="1"/>
</dbReference>
<dbReference type="PROSITE" id="PS00783">
    <property type="entry name" value="RIBOSOMAL_L13"/>
    <property type="match status" value="1"/>
</dbReference>
<name>RL13_STRGG</name>
<evidence type="ECO:0000255" key="1">
    <source>
        <dbReference type="HAMAP-Rule" id="MF_01366"/>
    </source>
</evidence>
<evidence type="ECO:0000305" key="2"/>
<reference key="1">
    <citation type="journal article" date="2008" name="J. Bacteriol.">
        <title>Genome sequence of the streptomycin-producing microorganism Streptomyces griseus IFO 13350.</title>
        <authorList>
            <person name="Ohnishi Y."/>
            <person name="Ishikawa J."/>
            <person name="Hara H."/>
            <person name="Suzuki H."/>
            <person name="Ikenoya M."/>
            <person name="Ikeda H."/>
            <person name="Yamashita A."/>
            <person name="Hattori M."/>
            <person name="Horinouchi S."/>
        </authorList>
    </citation>
    <scope>NUCLEOTIDE SEQUENCE [LARGE SCALE GENOMIC DNA]</scope>
    <source>
        <strain>JCM 4626 / CBS 651.72 / NBRC 13350 / KCC S-0626 / ISP 5235</strain>
    </source>
</reference>
<accession>B1W3X5</accession>
<feature type="chain" id="PRO_1000144182" description="Large ribosomal subunit protein uL13">
    <location>
        <begin position="1"/>
        <end position="147"/>
    </location>
</feature>
<proteinExistence type="inferred from homology"/>
<gene>
    <name evidence="1" type="primary">rplM</name>
    <name type="ordered locus">SGR_2802</name>
</gene>
<comment type="function">
    <text evidence="1">This protein is one of the early assembly proteins of the 50S ribosomal subunit, although it is not seen to bind rRNA by itself. It is important during the early stages of 50S assembly.</text>
</comment>
<comment type="subunit">
    <text evidence="1">Part of the 50S ribosomal subunit.</text>
</comment>
<comment type="similarity">
    <text evidence="1">Belongs to the universal ribosomal protein uL13 family.</text>
</comment>
<protein>
    <recommendedName>
        <fullName evidence="1">Large ribosomal subunit protein uL13</fullName>
    </recommendedName>
    <alternativeName>
        <fullName evidence="2">50S ribosomal protein L13</fullName>
    </alternativeName>
</protein>
<keyword id="KW-0687">Ribonucleoprotein</keyword>
<keyword id="KW-0689">Ribosomal protein</keyword>